<evidence type="ECO:0000250" key="1"/>
<evidence type="ECO:0000255" key="2">
    <source>
        <dbReference type="PROSITE-ProRule" id="PRU00656"/>
    </source>
</evidence>
<evidence type="ECO:0000305" key="3"/>
<dbReference type="EMBL" id="S78782">
    <property type="protein sequence ID" value="AAB35016.1"/>
    <property type="molecule type" value="Genomic_DNA"/>
</dbReference>
<dbReference type="SMR" id="Q53533"/>
<dbReference type="GO" id="GO:0005576">
    <property type="term" value="C:extracellular region"/>
    <property type="evidence" value="ECO:0007669"/>
    <property type="project" value="UniProtKB-SubCell"/>
</dbReference>
<dbReference type="GO" id="GO:0009374">
    <property type="term" value="F:biotin binding"/>
    <property type="evidence" value="ECO:0007669"/>
    <property type="project" value="InterPro"/>
</dbReference>
<dbReference type="Gene3D" id="2.40.128.30">
    <property type="entry name" value="Avidin-like"/>
    <property type="match status" value="1"/>
</dbReference>
<dbReference type="InterPro" id="IPR005469">
    <property type="entry name" value="Avidin"/>
</dbReference>
<dbReference type="InterPro" id="IPR017889">
    <property type="entry name" value="Avidin-like_CS"/>
</dbReference>
<dbReference type="InterPro" id="IPR036896">
    <property type="entry name" value="Avidin-like_sf"/>
</dbReference>
<dbReference type="InterPro" id="IPR005468">
    <property type="entry name" value="Avidin/str"/>
</dbReference>
<dbReference type="InterPro" id="IPR051764">
    <property type="entry name" value="Avidin/Streptavidin-rel"/>
</dbReference>
<dbReference type="NCBIfam" id="NF047623">
    <property type="entry name" value="Stavidin"/>
    <property type="match status" value="1"/>
</dbReference>
<dbReference type="PANTHER" id="PTHR34399">
    <property type="entry name" value="AVIDIN-RELATED"/>
    <property type="match status" value="1"/>
</dbReference>
<dbReference type="Pfam" id="PF01382">
    <property type="entry name" value="Avidin"/>
    <property type="match status" value="1"/>
</dbReference>
<dbReference type="PRINTS" id="PR00709">
    <property type="entry name" value="AVIDIN"/>
</dbReference>
<dbReference type="SUPFAM" id="SSF50876">
    <property type="entry name" value="Avidin/streptavidin"/>
    <property type="match status" value="1"/>
</dbReference>
<dbReference type="PROSITE" id="PS00577">
    <property type="entry name" value="AVIDIN_1"/>
    <property type="match status" value="1"/>
</dbReference>
<dbReference type="PROSITE" id="PS51326">
    <property type="entry name" value="AVIDIN_2"/>
    <property type="match status" value="1"/>
</dbReference>
<organism>
    <name type="scientific">Streptomyces violaceus</name>
    <name type="common">Streptomyces venezuelae</name>
    <dbReference type="NCBI Taxonomy" id="1936"/>
    <lineage>
        <taxon>Bacteria</taxon>
        <taxon>Bacillati</taxon>
        <taxon>Actinomycetota</taxon>
        <taxon>Actinomycetes</taxon>
        <taxon>Kitasatosporales</taxon>
        <taxon>Streptomycetaceae</taxon>
        <taxon>Streptomyces</taxon>
    </lineage>
</organism>
<keyword id="KW-0092">Biotin</keyword>
<keyword id="KW-0964">Secreted</keyword>
<keyword id="KW-0732">Signal</keyword>
<accession>Q53533</accession>
<proteinExistence type="inferred from homology"/>
<protein>
    <recommendedName>
        <fullName>Streptavidin-V2</fullName>
        <shortName>SA V2</shortName>
    </recommendedName>
</protein>
<reference key="1">
    <citation type="journal article" date="1995" name="Biochim. Biophys. Acta">
        <title>Close similarity among streptavidin-like, biotin-binding proteins from Streptomyces.</title>
        <authorList>
            <person name="Bayer E.A."/>
            <person name="Kulik T."/>
            <person name="Adar R."/>
            <person name="Wilchek M."/>
        </authorList>
    </citation>
    <scope>NUCLEOTIDE SEQUENCE [GENOMIC DNA]</scope>
</reference>
<sequence>MRKIVVAAIAVSLTTVGITASASADPSKDSKAQAAVAEAGITGTWYNQLGSTFIVTANADGSLTGTYESAVGNAESRYVLTGRYDSAPATDGSGTALGWTVAWKNNYRNAHSATTWSGQYVAGSEARINTQWLLTSGTTAANAWKSTLVGHDTFTKVKPSAASIDAAKKAGVNNGNPLDAVQQ</sequence>
<comment type="function">
    <text>The biological function of streptavidin is not known. Forms a strong non-covalent specific complex with biotin (one molecule of biotin per subunit of streptavidin).</text>
</comment>
<comment type="subunit">
    <text evidence="2">Homotetramer.</text>
</comment>
<comment type="subcellular location">
    <subcellularLocation>
        <location>Secreted</location>
    </subcellularLocation>
</comment>
<comment type="similarity">
    <text evidence="3">Belongs to the avidin/streptavidin family.</text>
</comment>
<name>SAV2_STRVL</name>
<feature type="signal peptide" evidence="1">
    <location>
        <begin position="1"/>
        <end position="24"/>
    </location>
</feature>
<feature type="chain" id="PRO_0000002731" description="Streptavidin-V2">
    <location>
        <begin position="25"/>
        <end position="183"/>
    </location>
</feature>
<feature type="domain" description="Avidin-like" evidence="2">
    <location>
        <begin position="37"/>
        <end position="159"/>
    </location>
</feature>
<feature type="short sequence motif" description="Cell attachment site; atypical">
    <location>
        <begin position="83"/>
        <end position="85"/>
    </location>
</feature>
<feature type="binding site" evidence="1">
    <location>
        <position position="67"/>
    </location>
    <ligand>
        <name>biotin</name>
        <dbReference type="ChEBI" id="CHEBI:57586"/>
    </ligand>
</feature>
<feature type="binding site" evidence="1">
    <location>
        <position position="78"/>
    </location>
    <ligand>
        <name>biotin</name>
        <dbReference type="ChEBI" id="CHEBI:57586"/>
    </ligand>
</feature>
<feature type="binding site" evidence="1">
    <location>
        <position position="116"/>
    </location>
    <ligand>
        <name>biotin</name>
        <dbReference type="ChEBI" id="CHEBI:57586"/>
    </ligand>
</feature>
<feature type="binding site" evidence="1">
    <location>
        <position position="132"/>
    </location>
    <ligand>
        <name>biotin</name>
        <dbReference type="ChEBI" id="CHEBI:57586"/>
    </ligand>
</feature>
<feature type="binding site" evidence="1">
    <location>
        <position position="144"/>
    </location>
    <ligand>
        <name>biotin</name>
        <dbReference type="ChEBI" id="CHEBI:57586"/>
    </ligand>
</feature>